<dbReference type="EMBL" id="AP008231">
    <property type="protein sequence ID" value="BAD78490.1"/>
    <property type="molecule type" value="Genomic_DNA"/>
</dbReference>
<dbReference type="RefSeq" id="WP_011242614.1">
    <property type="nucleotide sequence ID" value="NZ_CP085785.1"/>
</dbReference>
<dbReference type="SMR" id="P31083"/>
<dbReference type="KEGG" id="syc:syc0300_d"/>
<dbReference type="eggNOG" id="ENOG502ZBQN">
    <property type="taxonomic scope" value="Bacteria"/>
</dbReference>
<dbReference type="Proteomes" id="UP000001175">
    <property type="component" value="Chromosome"/>
</dbReference>
<dbReference type="GO" id="GO:0009538">
    <property type="term" value="C:photosystem I reaction center"/>
    <property type="evidence" value="ECO:0007669"/>
    <property type="project" value="InterPro"/>
</dbReference>
<dbReference type="GO" id="GO:0015979">
    <property type="term" value="P:photosynthesis"/>
    <property type="evidence" value="ECO:0007669"/>
    <property type="project" value="UniProtKB-KW"/>
</dbReference>
<dbReference type="Gene3D" id="1.10.8.110">
    <property type="entry name" value="Photosystem I PsaF, reaction centre subunit III"/>
    <property type="match status" value="1"/>
</dbReference>
<dbReference type="InterPro" id="IPR003666">
    <property type="entry name" value="PSI_PsaF"/>
</dbReference>
<dbReference type="InterPro" id="IPR036577">
    <property type="entry name" value="PSI_PsaF_sf"/>
</dbReference>
<dbReference type="PANTHER" id="PTHR34939">
    <property type="entry name" value="PHOTOSYSTEM I REACTION CENTER SUBUNIT III, CHLOROPLASTIC"/>
    <property type="match status" value="1"/>
</dbReference>
<dbReference type="PANTHER" id="PTHR34939:SF1">
    <property type="entry name" value="PHOTOSYSTEM I REACTION CENTER SUBUNIT III, CHLOROPLASTIC"/>
    <property type="match status" value="1"/>
</dbReference>
<dbReference type="Pfam" id="PF02507">
    <property type="entry name" value="PSI_PsaF"/>
    <property type="match status" value="1"/>
</dbReference>
<dbReference type="SUPFAM" id="SSF81536">
    <property type="entry name" value="Subunit III of photosystem I reaction centre, PsaF"/>
    <property type="match status" value="1"/>
</dbReference>
<name>PSAF_SYNP6</name>
<feature type="signal peptide" evidence="1">
    <location>
        <begin position="1"/>
        <end position="23"/>
    </location>
</feature>
<feature type="chain" id="PRO_0000029354" description="Photosystem I reaction center subunit III">
    <location>
        <begin position="24"/>
        <end position="159"/>
    </location>
</feature>
<feature type="sequence conflict" description="In Ref. 2; AA sequence." evidence="2" ref="2">
    <original>C</original>
    <variation>T</variation>
    <location>
        <position position="31"/>
    </location>
</feature>
<organism>
    <name type="scientific">Synechococcus sp. (strain ATCC 27144 / PCC 6301 / SAUG 1402/1)</name>
    <name type="common">Anacystis nidulans</name>
    <dbReference type="NCBI Taxonomy" id="269084"/>
    <lineage>
        <taxon>Bacteria</taxon>
        <taxon>Bacillati</taxon>
        <taxon>Cyanobacteriota</taxon>
        <taxon>Cyanophyceae</taxon>
        <taxon>Synechococcales</taxon>
        <taxon>Synechococcaceae</taxon>
        <taxon>Synechococcus</taxon>
    </lineage>
</organism>
<protein>
    <recommendedName>
        <fullName>Photosystem I reaction center subunit III</fullName>
    </recommendedName>
    <alternativeName>
        <fullName>PSI-F</fullName>
    </alternativeName>
</protein>
<reference key="1">
    <citation type="journal article" date="2007" name="Photosyn. Res.">
        <title>Complete nucleotide sequence of the freshwater unicellular cyanobacterium Synechococcus elongatus PCC 6301 chromosome: gene content and organization.</title>
        <authorList>
            <person name="Sugita C."/>
            <person name="Ogata K."/>
            <person name="Shikata M."/>
            <person name="Jikuya H."/>
            <person name="Takano J."/>
            <person name="Furumichi M."/>
            <person name="Kanehisa M."/>
            <person name="Omata T."/>
            <person name="Sugiura M."/>
            <person name="Sugita M."/>
        </authorList>
    </citation>
    <scope>NUCLEOTIDE SEQUENCE [LARGE SCALE GENOMIC DNA]</scope>
    <source>
        <strain>ATCC 27144 / PCC 6301 / SAUG 1402/1</strain>
    </source>
</reference>
<reference key="2">
    <citation type="journal article" date="1991" name="Biochim. Biophys. Acta">
        <title>Polypeptide composition of the Photosystem I complex and the Photosystem I core protein from Synechococcus sp. PCC 6301.</title>
        <authorList>
            <person name="Li N."/>
            <person name="Warren P.V."/>
            <person name="Golbeck J.H."/>
            <person name="Frank G."/>
            <person name="Zuber H."/>
            <person name="Bryant D.A."/>
        </authorList>
    </citation>
    <scope>PROTEIN SEQUENCE OF 24-52</scope>
</reference>
<comment type="function">
    <text>Probably participates in efficiency of electron transfer from plastocyanin to P700 (or cytochrome c553 in algae and cyanobacteria). This plastocyanin-docking protein contributes to the specific association of plastocyanin to PSI.</text>
</comment>
<comment type="similarity">
    <text evidence="2">Belongs to the PsaF family.</text>
</comment>
<gene>
    <name type="primary">psaF</name>
    <name type="ordered locus">syc0300_d</name>
</gene>
<accession>P31083</accession>
<accession>Q5N5C8</accession>
<sequence length="159" mass="17109">MRRLFAVVLAACLWLGFAPQASADVAGLTPCSESPRFIQRAEAAATPQAKARFENYSQALCGADGLPHLIVDGRLDHAGDFIIPSLLFLYIAGWIGWVGRSYLQAIKSDKDAAGKEIVIDVPLAVKFSLTGFAWPLAAFQEFSSGKLLAKADEITVSPR</sequence>
<evidence type="ECO:0000269" key="1">
    <source>
    </source>
</evidence>
<evidence type="ECO:0000305" key="2"/>
<proteinExistence type="evidence at protein level"/>
<keyword id="KW-0903">Direct protein sequencing</keyword>
<keyword id="KW-0602">Photosynthesis</keyword>
<keyword id="KW-0603">Photosystem I</keyword>
<keyword id="KW-0732">Signal</keyword>